<proteinExistence type="inferred from homology"/>
<reference key="1">
    <citation type="journal article" date="2002" name="Nat. Genet.">
        <title>Evidence of en bloc duplication in vertebrate genomes.</title>
        <authorList>
            <person name="Abi-Rached L."/>
            <person name="Gilles A."/>
            <person name="Shiina T."/>
            <person name="Pontarotti P."/>
            <person name="Inoko H."/>
        </authorList>
    </citation>
    <scope>NUCLEOTIDE SEQUENCE [GENOMIC DNA]</scope>
</reference>
<evidence type="ECO:0000256" key="1">
    <source>
        <dbReference type="SAM" id="MobiDB-lite"/>
    </source>
</evidence>
<evidence type="ECO:0000305" key="2"/>
<name>MDH1B_BRAFL</name>
<comment type="similarity">
    <text evidence="2">Belongs to the LDH/MDH superfamily. MDH type 2 family.</text>
</comment>
<feature type="chain" id="PRO_0000331437" description="Putative malate dehydrogenase 1B">
    <location>
        <begin position="1"/>
        <end position="522"/>
    </location>
</feature>
<feature type="region of interest" description="Disordered" evidence="1">
    <location>
        <begin position="495"/>
        <end position="522"/>
    </location>
</feature>
<dbReference type="EC" id="1.1.1.-"/>
<dbReference type="EMBL" id="AF391289">
    <property type="protein sequence ID" value="AAM18871.1"/>
    <property type="molecule type" value="Genomic_DNA"/>
</dbReference>
<dbReference type="SMR" id="Q8T773"/>
<dbReference type="eggNOG" id="KOG1496">
    <property type="taxonomic scope" value="Eukaryota"/>
</dbReference>
<dbReference type="Proteomes" id="UP000001554">
    <property type="component" value="Unplaced"/>
</dbReference>
<dbReference type="GO" id="GO:0030060">
    <property type="term" value="F:L-malate dehydrogenase (NAD+) activity"/>
    <property type="evidence" value="ECO:0000318"/>
    <property type="project" value="GO_Central"/>
</dbReference>
<dbReference type="GO" id="GO:0006108">
    <property type="term" value="P:malate metabolic process"/>
    <property type="evidence" value="ECO:0000318"/>
    <property type="project" value="GO_Central"/>
</dbReference>
<dbReference type="GO" id="GO:0006734">
    <property type="term" value="P:NADH metabolic process"/>
    <property type="evidence" value="ECO:0000318"/>
    <property type="project" value="GO_Central"/>
</dbReference>
<dbReference type="GO" id="GO:0006107">
    <property type="term" value="P:oxaloacetate metabolic process"/>
    <property type="evidence" value="ECO:0000318"/>
    <property type="project" value="GO_Central"/>
</dbReference>
<dbReference type="GO" id="GO:0006099">
    <property type="term" value="P:tricarboxylic acid cycle"/>
    <property type="evidence" value="ECO:0000318"/>
    <property type="project" value="GO_Central"/>
</dbReference>
<dbReference type="CDD" id="cd05295">
    <property type="entry name" value="MDH_like"/>
    <property type="match status" value="1"/>
</dbReference>
<dbReference type="FunFam" id="3.40.50.720:FF:000144">
    <property type="entry name" value="Malate dehydrogenase [NADP]"/>
    <property type="match status" value="1"/>
</dbReference>
<dbReference type="FunFam" id="3.90.110.10:FF:000006">
    <property type="entry name" value="putative malate dehydrogenase 1B"/>
    <property type="match status" value="1"/>
</dbReference>
<dbReference type="Gene3D" id="3.90.110.10">
    <property type="entry name" value="Lactate dehydrogenase/glycoside hydrolase, family 4, C-terminal"/>
    <property type="match status" value="1"/>
</dbReference>
<dbReference type="Gene3D" id="3.40.50.720">
    <property type="entry name" value="NAD(P)-binding Rossmann-like Domain"/>
    <property type="match status" value="1"/>
</dbReference>
<dbReference type="InterPro" id="IPR022383">
    <property type="entry name" value="Lactate/malate_DH_C"/>
</dbReference>
<dbReference type="InterPro" id="IPR015955">
    <property type="entry name" value="Lactate_DH/Glyco_Ohase_4_C"/>
</dbReference>
<dbReference type="InterPro" id="IPR010945">
    <property type="entry name" value="Malate_DH_type2"/>
</dbReference>
<dbReference type="InterPro" id="IPR036291">
    <property type="entry name" value="NAD(P)-bd_dom_sf"/>
</dbReference>
<dbReference type="PANTHER" id="PTHR23382">
    <property type="entry name" value="MALATE DEHYDROGENASE"/>
    <property type="match status" value="1"/>
</dbReference>
<dbReference type="Pfam" id="PF02866">
    <property type="entry name" value="Ldh_1_C"/>
    <property type="match status" value="1"/>
</dbReference>
<dbReference type="SUPFAM" id="SSF56327">
    <property type="entry name" value="LDH C-terminal domain-like"/>
    <property type="match status" value="1"/>
</dbReference>
<dbReference type="SUPFAM" id="SSF51735">
    <property type="entry name" value="NAD(P)-binding Rossmann-fold domains"/>
    <property type="match status" value="1"/>
</dbReference>
<gene>
    <name type="primary">MDH1B</name>
</gene>
<protein>
    <recommendedName>
        <fullName>Putative malate dehydrogenase 1B</fullName>
        <ecNumber>1.1.1.-</ecNumber>
    </recommendedName>
</protein>
<sequence>MAKFVIAGQADCPYYAKVELLADSLQSKLQDFHVHKIVKTPEEWKPWLQQLCADNGWTHGRSPIIWRELVDRGGKGLLIGGHNDFMEYARSYYGMTSGMLSEMMKNIAAENLAVTQELREEEETIRRQSKPLHVCVINAARSPAYHVLPSLVNGKILREEEIALHLHDSEENLEKLKGLEMEVFDLSFPFLKEISVTTDLPTAFQNAHIAIVLDDFDQGGKEDAIGDMETKVSFYKRVAEAINQTASKDIRVLVAGTGPLNSLVSILIDHTPSIPRQNIAAVAQVKERQAKSLLAKRLTVNSAGVCDVIVWGNVGGTTYTDVSRARVHGYDGAIWGPPSYSCSVSEMVHDNKWLEGEFLEQLQSRSHTIQDSLQHSADLSMAAAISSTLSYWWNGSPEGQLFSLAVCSEGFYNIPEGVVFSFPVMFHKGSWEVVQDIDMNEDMRVMLSSITAQLVEEKDLLLHPTNANHEKLLKVFGVTTDISTPSSVKLDKIMEETEKSSSEDTPEAAAAAVSTGDETVPS</sequence>
<accession>Q8T773</accession>
<keyword id="KW-0520">NAD</keyword>
<keyword id="KW-0560">Oxidoreductase</keyword>
<keyword id="KW-1185">Reference proteome</keyword>
<keyword id="KW-0816">Tricarboxylic acid cycle</keyword>
<organism>
    <name type="scientific">Branchiostoma floridae</name>
    <name type="common">Florida lancelet</name>
    <name type="synonym">Amphioxus</name>
    <dbReference type="NCBI Taxonomy" id="7739"/>
    <lineage>
        <taxon>Eukaryota</taxon>
        <taxon>Metazoa</taxon>
        <taxon>Chordata</taxon>
        <taxon>Cephalochordata</taxon>
        <taxon>Leptocardii</taxon>
        <taxon>Amphioxiformes</taxon>
        <taxon>Branchiostomatidae</taxon>
        <taxon>Branchiostoma</taxon>
    </lineage>
</organism>